<comment type="function">
    <text evidence="1">B6-vitamer kinase involved in the salvage pathway of pyridoxal 5'-phosphate (PLP). Catalyzes the phosphorylation of pyridoxine (PN), pyridoxal (PL), and pyridoxamine (PM), forming their respective 5'-phosphorylated esters, i.e. PNP, PLP and PMP.</text>
</comment>
<comment type="catalytic activity">
    <reaction evidence="1">
        <text>pyridoxal + ATP = pyridoxal 5'-phosphate + ADP + H(+)</text>
        <dbReference type="Rhea" id="RHEA:10224"/>
        <dbReference type="ChEBI" id="CHEBI:15378"/>
        <dbReference type="ChEBI" id="CHEBI:17310"/>
        <dbReference type="ChEBI" id="CHEBI:30616"/>
        <dbReference type="ChEBI" id="CHEBI:456216"/>
        <dbReference type="ChEBI" id="CHEBI:597326"/>
        <dbReference type="EC" id="2.7.1.35"/>
    </reaction>
</comment>
<comment type="catalytic activity">
    <reaction evidence="1">
        <text>pyridoxine + ATP = pyridoxine 5'-phosphate + ADP + H(+)</text>
        <dbReference type="Rhea" id="RHEA:25108"/>
        <dbReference type="ChEBI" id="CHEBI:15378"/>
        <dbReference type="ChEBI" id="CHEBI:16709"/>
        <dbReference type="ChEBI" id="CHEBI:30616"/>
        <dbReference type="ChEBI" id="CHEBI:58589"/>
        <dbReference type="ChEBI" id="CHEBI:456216"/>
        <dbReference type="EC" id="2.7.1.35"/>
    </reaction>
</comment>
<comment type="catalytic activity">
    <reaction evidence="1">
        <text>pyridoxamine + ATP = pyridoxamine 5'-phosphate + ADP + H(+)</text>
        <dbReference type="Rhea" id="RHEA:25104"/>
        <dbReference type="ChEBI" id="CHEBI:15378"/>
        <dbReference type="ChEBI" id="CHEBI:30616"/>
        <dbReference type="ChEBI" id="CHEBI:57761"/>
        <dbReference type="ChEBI" id="CHEBI:58451"/>
        <dbReference type="ChEBI" id="CHEBI:456216"/>
        <dbReference type="EC" id="2.7.1.35"/>
    </reaction>
</comment>
<comment type="cofactor">
    <cofactor evidence="1">
        <name>Mg(2+)</name>
        <dbReference type="ChEBI" id="CHEBI:18420"/>
    </cofactor>
</comment>
<comment type="pathway">
    <text evidence="1">Cofactor metabolism; pyridoxal 5'-phosphate salvage; pyridoxal 5'-phosphate from pyridoxal: step 1/1.</text>
</comment>
<comment type="pathway">
    <text evidence="1">Cofactor metabolism; pyridoxal 5'-phosphate salvage; pyridoxine 5'-phosphate from pyridoxine: step 1/1.</text>
</comment>
<comment type="pathway">
    <text evidence="1">Cofactor metabolism; pyridoxal 5'-phosphate salvage; pyridoxamine 5'-phosphate from pyridoxamine: step 1/1.</text>
</comment>
<comment type="subunit">
    <text evidence="1">Homodimer.</text>
</comment>
<comment type="similarity">
    <text evidence="1">Belongs to the pyridoxine kinase family. PdxK subfamily.</text>
</comment>
<accession>Q5PNC8</accession>
<feature type="chain" id="PRO_0000268841" description="Pyridoxine/pyridoxal/pyridoxamine kinase">
    <location>
        <begin position="1"/>
        <end position="288"/>
    </location>
</feature>
<feature type="binding site" evidence="1">
    <location>
        <position position="28"/>
    </location>
    <ligand>
        <name>substrate</name>
    </ligand>
</feature>
<feature type="binding site" evidence="1">
    <location>
        <position position="64"/>
    </location>
    <ligand>
        <name>substrate</name>
    </ligand>
</feature>
<feature type="binding site" evidence="1">
    <location>
        <position position="130"/>
    </location>
    <ligand>
        <name>ATP</name>
        <dbReference type="ChEBI" id="CHEBI:30616"/>
    </ligand>
</feature>
<feature type="binding site" evidence="1">
    <location>
        <position position="141"/>
    </location>
    <ligand>
        <name>Mg(2+)</name>
        <dbReference type="ChEBI" id="CHEBI:18420"/>
    </ligand>
</feature>
<feature type="binding site" evidence="1">
    <location>
        <position position="162"/>
    </location>
    <ligand>
        <name>ATP</name>
        <dbReference type="ChEBI" id="CHEBI:30616"/>
    </ligand>
</feature>
<feature type="binding site" evidence="1">
    <location>
        <position position="167"/>
    </location>
    <ligand>
        <name>ATP</name>
        <dbReference type="ChEBI" id="CHEBI:30616"/>
    </ligand>
</feature>
<feature type="binding site" evidence="1">
    <location>
        <position position="167"/>
    </location>
    <ligand>
        <name>Mg(2+)</name>
        <dbReference type="ChEBI" id="CHEBI:18420"/>
    </ligand>
</feature>
<feature type="binding site" evidence="1">
    <location>
        <position position="200"/>
    </location>
    <ligand>
        <name>ATP</name>
        <dbReference type="ChEBI" id="CHEBI:30616"/>
    </ligand>
</feature>
<feature type="binding site" evidence="1">
    <location>
        <begin position="225"/>
        <end position="228"/>
    </location>
    <ligand>
        <name>ATP</name>
        <dbReference type="ChEBI" id="CHEBI:30616"/>
    </ligand>
</feature>
<feature type="binding site" evidence="1">
    <location>
        <position position="235"/>
    </location>
    <ligand>
        <name>ATP</name>
        <dbReference type="ChEBI" id="CHEBI:30616"/>
    </ligand>
</feature>
<feature type="binding site" evidence="1">
    <location>
        <position position="237"/>
    </location>
    <ligand>
        <name>substrate</name>
    </ligand>
</feature>
<evidence type="ECO:0000255" key="1">
    <source>
        <dbReference type="HAMAP-Rule" id="MF_01638"/>
    </source>
</evidence>
<organism>
    <name type="scientific">Salmonella paratyphi A (strain ATCC 9150 / SARB42)</name>
    <dbReference type="NCBI Taxonomy" id="295319"/>
    <lineage>
        <taxon>Bacteria</taxon>
        <taxon>Pseudomonadati</taxon>
        <taxon>Pseudomonadota</taxon>
        <taxon>Gammaproteobacteria</taxon>
        <taxon>Enterobacterales</taxon>
        <taxon>Enterobacteriaceae</taxon>
        <taxon>Salmonella</taxon>
    </lineage>
</organism>
<keyword id="KW-0067">ATP-binding</keyword>
<keyword id="KW-0418">Kinase</keyword>
<keyword id="KW-0460">Magnesium</keyword>
<keyword id="KW-0479">Metal-binding</keyword>
<keyword id="KW-0547">Nucleotide-binding</keyword>
<keyword id="KW-0808">Transferase</keyword>
<keyword id="KW-0862">Zinc</keyword>
<gene>
    <name evidence="1" type="primary">pdxK</name>
    <name type="ordered locus">SPA0430</name>
</gene>
<name>PDXK_SALPA</name>
<proteinExistence type="inferred from homology"/>
<reference key="1">
    <citation type="journal article" date="2004" name="Nat. Genet.">
        <title>Comparison of genome degradation in Paratyphi A and Typhi, human-restricted serovars of Salmonella enterica that cause typhoid.</title>
        <authorList>
            <person name="McClelland M."/>
            <person name="Sanderson K.E."/>
            <person name="Clifton S.W."/>
            <person name="Latreille P."/>
            <person name="Porwollik S."/>
            <person name="Sabo A."/>
            <person name="Meyer R."/>
            <person name="Bieri T."/>
            <person name="Ozersky P."/>
            <person name="McLellan M."/>
            <person name="Harkins C.R."/>
            <person name="Wang C."/>
            <person name="Nguyen C."/>
            <person name="Berghoff A."/>
            <person name="Elliott G."/>
            <person name="Kohlberg S."/>
            <person name="Strong C."/>
            <person name="Du F."/>
            <person name="Carter J."/>
            <person name="Kremizki C."/>
            <person name="Layman D."/>
            <person name="Leonard S."/>
            <person name="Sun H."/>
            <person name="Fulton L."/>
            <person name="Nash W."/>
            <person name="Miner T."/>
            <person name="Minx P."/>
            <person name="Delehaunty K."/>
            <person name="Fronick C."/>
            <person name="Magrini V."/>
            <person name="Nhan M."/>
            <person name="Warren W."/>
            <person name="Florea L."/>
            <person name="Spieth J."/>
            <person name="Wilson R.K."/>
        </authorList>
    </citation>
    <scope>NUCLEOTIDE SEQUENCE [LARGE SCALE GENOMIC DNA]</scope>
    <source>
        <strain>ATCC 9150 / SARB42</strain>
    </source>
</reference>
<protein>
    <recommendedName>
        <fullName evidence="1">Pyridoxine/pyridoxal/pyridoxamine kinase</fullName>
        <shortName evidence="1">PN/PL/PM kinase</shortName>
        <ecNumber evidence="1">2.7.1.35</ecNumber>
    </recommendedName>
    <alternativeName>
        <fullName evidence="1">B6-vitamer kinase</fullName>
    </alternativeName>
</protein>
<sequence>MGQESDIQSVLFDDNHRALQTDIVAVQSQVVYGSVGNSIAVPAIKAQGLRVTAVPTVLFSNTPHYKTFYGGIIPAEWFAGYLTALNERDALRELKAITTGYMGSADQIVLLSKWLMAIRASHPEVCILVDPVIGDTDSGMYVQAEIPQAYRTYLLPQAQGLTPNVFELEMLSGKPCRTLEEAVAAAQSLLSDTLKWVVITSAPGESLETITVAVVTAQVVEVFAHPRVATELKGTGDLFCAELVSDIVQGKKLTTAAKDAAQRVLEVMTWTQQCGCDELILPPAGEAR</sequence>
<dbReference type="EC" id="2.7.1.35" evidence="1"/>
<dbReference type="EMBL" id="CP000026">
    <property type="protein sequence ID" value="AAV76441.1"/>
    <property type="molecule type" value="Genomic_DNA"/>
</dbReference>
<dbReference type="RefSeq" id="WP_000529622.1">
    <property type="nucleotide sequence ID" value="NC_006511.1"/>
</dbReference>
<dbReference type="SMR" id="Q5PNC8"/>
<dbReference type="KEGG" id="spt:SPA0430"/>
<dbReference type="HOGENOM" id="CLU_046496_3_1_6"/>
<dbReference type="UniPathway" id="UPA01068">
    <property type="reaction ID" value="UER00298"/>
</dbReference>
<dbReference type="UniPathway" id="UPA01068">
    <property type="reaction ID" value="UER00299"/>
</dbReference>
<dbReference type="UniPathway" id="UPA01068">
    <property type="reaction ID" value="UER00300"/>
</dbReference>
<dbReference type="Proteomes" id="UP000008185">
    <property type="component" value="Chromosome"/>
</dbReference>
<dbReference type="GO" id="GO:0005829">
    <property type="term" value="C:cytosol"/>
    <property type="evidence" value="ECO:0007669"/>
    <property type="project" value="TreeGrafter"/>
</dbReference>
<dbReference type="GO" id="GO:0005524">
    <property type="term" value="F:ATP binding"/>
    <property type="evidence" value="ECO:0007669"/>
    <property type="project" value="UniProtKB-UniRule"/>
</dbReference>
<dbReference type="GO" id="GO:0008902">
    <property type="term" value="F:hydroxymethylpyrimidine kinase activity"/>
    <property type="evidence" value="ECO:0007669"/>
    <property type="project" value="TreeGrafter"/>
</dbReference>
<dbReference type="GO" id="GO:0000287">
    <property type="term" value="F:magnesium ion binding"/>
    <property type="evidence" value="ECO:0007669"/>
    <property type="project" value="UniProtKB-UniRule"/>
</dbReference>
<dbReference type="GO" id="GO:0008478">
    <property type="term" value="F:pyridoxal kinase activity"/>
    <property type="evidence" value="ECO:0007669"/>
    <property type="project" value="UniProtKB-UniRule"/>
</dbReference>
<dbReference type="GO" id="GO:0008270">
    <property type="term" value="F:zinc ion binding"/>
    <property type="evidence" value="ECO:0007669"/>
    <property type="project" value="UniProtKB-UniRule"/>
</dbReference>
<dbReference type="GO" id="GO:0009443">
    <property type="term" value="P:pyridoxal 5'-phosphate salvage"/>
    <property type="evidence" value="ECO:0007669"/>
    <property type="project" value="UniProtKB-UniRule"/>
</dbReference>
<dbReference type="CDD" id="cd01173">
    <property type="entry name" value="pyridoxal_pyridoxamine_kinase"/>
    <property type="match status" value="1"/>
</dbReference>
<dbReference type="FunFam" id="3.40.1190.20:FF:000009">
    <property type="entry name" value="Pyridoxine/pyridoxal/pyridoxamine kinase"/>
    <property type="match status" value="1"/>
</dbReference>
<dbReference type="Gene3D" id="3.40.1190.20">
    <property type="match status" value="1"/>
</dbReference>
<dbReference type="HAMAP" id="MF_01638">
    <property type="entry name" value="PdxK"/>
    <property type="match status" value="1"/>
</dbReference>
<dbReference type="InterPro" id="IPR023479">
    <property type="entry name" value="PdxK"/>
</dbReference>
<dbReference type="InterPro" id="IPR013749">
    <property type="entry name" value="PM/HMP-P_kinase-1"/>
</dbReference>
<dbReference type="InterPro" id="IPR004625">
    <property type="entry name" value="PyrdxlKinase"/>
</dbReference>
<dbReference type="InterPro" id="IPR029056">
    <property type="entry name" value="Ribokinase-like"/>
</dbReference>
<dbReference type="NCBIfam" id="NF006034">
    <property type="entry name" value="PRK08176.1"/>
    <property type="match status" value="1"/>
</dbReference>
<dbReference type="NCBIfam" id="TIGR00687">
    <property type="entry name" value="pyridox_kin"/>
    <property type="match status" value="1"/>
</dbReference>
<dbReference type="PANTHER" id="PTHR10534">
    <property type="entry name" value="PYRIDOXAL KINASE"/>
    <property type="match status" value="1"/>
</dbReference>
<dbReference type="PANTHER" id="PTHR10534:SF15">
    <property type="entry name" value="PYRIDOXINE_PYRIDOXAL_PYRIDOXAMINE KINASE"/>
    <property type="match status" value="1"/>
</dbReference>
<dbReference type="Pfam" id="PF08543">
    <property type="entry name" value="Phos_pyr_kin"/>
    <property type="match status" value="1"/>
</dbReference>
<dbReference type="SUPFAM" id="SSF53613">
    <property type="entry name" value="Ribokinase-like"/>
    <property type="match status" value="1"/>
</dbReference>